<accession>Q09X34</accession>
<organism>
    <name type="scientific">Morus indica</name>
    <name type="common">Mulberry</name>
    <dbReference type="NCBI Taxonomy" id="248361"/>
    <lineage>
        <taxon>Eukaryota</taxon>
        <taxon>Viridiplantae</taxon>
        <taxon>Streptophyta</taxon>
        <taxon>Embryophyta</taxon>
        <taxon>Tracheophyta</taxon>
        <taxon>Spermatophyta</taxon>
        <taxon>Magnoliopsida</taxon>
        <taxon>eudicotyledons</taxon>
        <taxon>Gunneridae</taxon>
        <taxon>Pentapetalae</taxon>
        <taxon>rosids</taxon>
        <taxon>fabids</taxon>
        <taxon>Rosales</taxon>
        <taxon>Moraceae</taxon>
        <taxon>Moreae</taxon>
        <taxon>Morus</taxon>
    </lineage>
</organism>
<reference key="1">
    <citation type="submission" date="2005-09" db="EMBL/GenBank/DDBJ databases">
        <title>The chloroplast genome of mulberry: structural features and comparative analysis.</title>
        <authorList>
            <person name="Ravi V."/>
            <person name="Khurana J.P."/>
            <person name="Tyagi A.K."/>
            <person name="Khurana P."/>
        </authorList>
    </citation>
    <scope>NUCLEOTIDE SEQUENCE [LARGE SCALE GENOMIC DNA]</scope>
    <source>
        <strain>cv. K2</strain>
    </source>
</reference>
<protein>
    <recommendedName>
        <fullName evidence="1">Photosystem II reaction center protein K</fullName>
        <shortName evidence="1">PSII-K</shortName>
    </recommendedName>
</protein>
<comment type="function">
    <text evidence="1">One of the components of the core complex of photosystem II (PSII). PSII is a light-driven water:plastoquinone oxidoreductase that uses light energy to abstract electrons from H(2)O, generating O(2) and a proton gradient subsequently used for ATP formation. It consists of a core antenna complex that captures photons, and an electron transfer chain that converts photonic excitation into a charge separation.</text>
</comment>
<comment type="subunit">
    <text evidence="1">PSII is composed of 1 copy each of membrane proteins PsbA, PsbB, PsbC, PsbD, PsbE, PsbF, PsbH, PsbI, PsbJ, PsbK, PsbL, PsbM, PsbT, PsbX, PsbY, PsbZ, Psb30/Ycf12, at least 3 peripheral proteins of the oxygen-evolving complex and a large number of cofactors. It forms dimeric complexes.</text>
</comment>
<comment type="subcellular location">
    <subcellularLocation>
        <location evidence="1">Plastid</location>
        <location evidence="1">Chloroplast thylakoid membrane</location>
        <topology evidence="1">Single-pass membrane protein</topology>
    </subcellularLocation>
</comment>
<comment type="similarity">
    <text evidence="1">Belongs to the PsbK family.</text>
</comment>
<proteinExistence type="inferred from homology"/>
<keyword id="KW-0150">Chloroplast</keyword>
<keyword id="KW-0472">Membrane</keyword>
<keyword id="KW-0602">Photosynthesis</keyword>
<keyword id="KW-0604">Photosystem II</keyword>
<keyword id="KW-0934">Plastid</keyword>
<keyword id="KW-0674">Reaction center</keyword>
<keyword id="KW-0793">Thylakoid</keyword>
<keyword id="KW-0812">Transmembrane</keyword>
<keyword id="KW-1133">Transmembrane helix</keyword>
<dbReference type="EMBL" id="DQ226511">
    <property type="protein sequence ID" value="ABB20941.1"/>
    <property type="molecule type" value="Genomic_DNA"/>
</dbReference>
<dbReference type="RefSeq" id="YP_762244.1">
    <property type="nucleotide sequence ID" value="NC_008359.1"/>
</dbReference>
<dbReference type="SMR" id="Q09X34"/>
<dbReference type="GeneID" id="4290658"/>
<dbReference type="GO" id="GO:0009535">
    <property type="term" value="C:chloroplast thylakoid membrane"/>
    <property type="evidence" value="ECO:0007669"/>
    <property type="project" value="UniProtKB-SubCell"/>
</dbReference>
<dbReference type="GO" id="GO:0009539">
    <property type="term" value="C:photosystem II reaction center"/>
    <property type="evidence" value="ECO:0007669"/>
    <property type="project" value="InterPro"/>
</dbReference>
<dbReference type="GO" id="GO:0015979">
    <property type="term" value="P:photosynthesis"/>
    <property type="evidence" value="ECO:0007669"/>
    <property type="project" value="UniProtKB-UniRule"/>
</dbReference>
<dbReference type="HAMAP" id="MF_00441">
    <property type="entry name" value="PSII_PsbK"/>
    <property type="match status" value="1"/>
</dbReference>
<dbReference type="InterPro" id="IPR003687">
    <property type="entry name" value="PSII_PsbK"/>
</dbReference>
<dbReference type="InterPro" id="IPR037270">
    <property type="entry name" value="PSII_PsbK_sf"/>
</dbReference>
<dbReference type="NCBIfam" id="NF002715">
    <property type="entry name" value="PRK02553.1"/>
    <property type="match status" value="1"/>
</dbReference>
<dbReference type="PANTHER" id="PTHR35325">
    <property type="match status" value="1"/>
</dbReference>
<dbReference type="PANTHER" id="PTHR35325:SF1">
    <property type="entry name" value="PHOTOSYSTEM II REACTION CENTER PROTEIN K"/>
    <property type="match status" value="1"/>
</dbReference>
<dbReference type="Pfam" id="PF02533">
    <property type="entry name" value="PsbK"/>
    <property type="match status" value="1"/>
</dbReference>
<dbReference type="SUPFAM" id="SSF161037">
    <property type="entry name" value="Photosystem II reaction center protein K, PsbK"/>
    <property type="match status" value="1"/>
</dbReference>
<gene>
    <name evidence="1" type="primary">psbK</name>
    <name type="ordered locus">MoinCp004</name>
</gene>
<sequence length="61" mass="6890">MLNIFSLICICLNSVLYSSSFFVAKLPEAYAFLNPIVDVMPVIPVLFFLLAFVWQAAVSFR</sequence>
<feature type="propeptide" id="PRO_0000276154" evidence="1">
    <location>
        <begin position="1"/>
        <end position="24"/>
    </location>
</feature>
<feature type="chain" id="PRO_0000276155" description="Photosystem II reaction center protein K" evidence="1">
    <location>
        <begin position="25"/>
        <end position="61"/>
    </location>
</feature>
<feature type="transmembrane region" description="Helical" evidence="1">
    <location>
        <begin position="40"/>
        <end position="60"/>
    </location>
</feature>
<name>PSBK_MORIN</name>
<evidence type="ECO:0000255" key="1">
    <source>
        <dbReference type="HAMAP-Rule" id="MF_00441"/>
    </source>
</evidence>
<geneLocation type="chloroplast"/>